<organism>
    <name type="scientific">Xanthomonas axonopodis pv. citri (strain 306)</name>
    <dbReference type="NCBI Taxonomy" id="190486"/>
    <lineage>
        <taxon>Bacteria</taxon>
        <taxon>Pseudomonadati</taxon>
        <taxon>Pseudomonadota</taxon>
        <taxon>Gammaproteobacteria</taxon>
        <taxon>Lysobacterales</taxon>
        <taxon>Lysobacteraceae</taxon>
        <taxon>Xanthomonas</taxon>
    </lineage>
</organism>
<reference key="1">
    <citation type="journal article" date="2002" name="Nature">
        <title>Comparison of the genomes of two Xanthomonas pathogens with differing host specificities.</title>
        <authorList>
            <person name="da Silva A.C.R."/>
            <person name="Ferro J.A."/>
            <person name="Reinach F.C."/>
            <person name="Farah C.S."/>
            <person name="Furlan L.R."/>
            <person name="Quaggio R.B."/>
            <person name="Monteiro-Vitorello C.B."/>
            <person name="Van Sluys M.A."/>
            <person name="Almeida N.F. Jr."/>
            <person name="Alves L.M.C."/>
            <person name="do Amaral A.M."/>
            <person name="Bertolini M.C."/>
            <person name="Camargo L.E.A."/>
            <person name="Camarotte G."/>
            <person name="Cannavan F."/>
            <person name="Cardozo J."/>
            <person name="Chambergo F."/>
            <person name="Ciapina L.P."/>
            <person name="Cicarelli R.M.B."/>
            <person name="Coutinho L.L."/>
            <person name="Cursino-Santos J.R."/>
            <person name="El-Dorry H."/>
            <person name="Faria J.B."/>
            <person name="Ferreira A.J.S."/>
            <person name="Ferreira R.C.C."/>
            <person name="Ferro M.I.T."/>
            <person name="Formighieri E.F."/>
            <person name="Franco M.C."/>
            <person name="Greggio C.C."/>
            <person name="Gruber A."/>
            <person name="Katsuyama A.M."/>
            <person name="Kishi L.T."/>
            <person name="Leite R.P."/>
            <person name="Lemos E.G.M."/>
            <person name="Lemos M.V.F."/>
            <person name="Locali E.C."/>
            <person name="Machado M.A."/>
            <person name="Madeira A.M.B.N."/>
            <person name="Martinez-Rossi N.M."/>
            <person name="Martins E.C."/>
            <person name="Meidanis J."/>
            <person name="Menck C.F.M."/>
            <person name="Miyaki C.Y."/>
            <person name="Moon D.H."/>
            <person name="Moreira L.M."/>
            <person name="Novo M.T.M."/>
            <person name="Okura V.K."/>
            <person name="Oliveira M.C."/>
            <person name="Oliveira V.R."/>
            <person name="Pereira H.A."/>
            <person name="Rossi A."/>
            <person name="Sena J.A.D."/>
            <person name="Silva C."/>
            <person name="de Souza R.F."/>
            <person name="Spinola L.A.F."/>
            <person name="Takita M.A."/>
            <person name="Tamura R.E."/>
            <person name="Teixeira E.C."/>
            <person name="Tezza R.I.D."/>
            <person name="Trindade dos Santos M."/>
            <person name="Truffi D."/>
            <person name="Tsai S.M."/>
            <person name="White F.F."/>
            <person name="Setubal J.C."/>
            <person name="Kitajima J.P."/>
        </authorList>
    </citation>
    <scope>NUCLEOTIDE SEQUENCE [LARGE SCALE GENOMIC DNA]</scope>
    <source>
        <strain>306</strain>
    </source>
</reference>
<feature type="chain" id="PRO_0000161236" description="Elongation factor Ts">
    <location>
        <begin position="1"/>
        <end position="292"/>
    </location>
</feature>
<feature type="region of interest" description="Involved in Mg(2+) ion dislocation from EF-Tu" evidence="1">
    <location>
        <begin position="79"/>
        <end position="82"/>
    </location>
</feature>
<name>EFTS_XANAC</name>
<keyword id="KW-0963">Cytoplasm</keyword>
<keyword id="KW-0251">Elongation factor</keyword>
<keyword id="KW-0648">Protein biosynthesis</keyword>
<gene>
    <name evidence="1" type="primary">tsf</name>
    <name type="ordered locus">XAC1421</name>
</gene>
<protein>
    <recommendedName>
        <fullName evidence="1">Elongation factor Ts</fullName>
        <shortName evidence="1">EF-Ts</shortName>
    </recommendedName>
</protein>
<proteinExistence type="inferred from homology"/>
<sequence>MEITASLVKELRERTGAGMMECKKALVENAGDIDAAAEWLRKSGLAKADKKADRVAAEGRIATAQAGGKAVLVEVNSETDFVAKDENFLAFTEVVANAALNSDAADAEALKSVKLDSGETIEERRAAVIAKVGENLQVRRLVRIDSANNVAAYVHGGRIGVLVELKGGDIELARGIAMHIAAMNPPHVKASDVPAEFVAKEKEIELAKMSEKDKAKPAEILEKIISGKISKIVNEVTLYGQPYVLNTDQTVEQAVKAAGAEVIGFQRLAVGEGIEKVVEDYAAEVMKQAGLA</sequence>
<comment type="function">
    <text evidence="1">Associates with the EF-Tu.GDP complex and induces the exchange of GDP to GTP. It remains bound to the aminoacyl-tRNA.EF-Tu.GTP complex up to the GTP hydrolysis stage on the ribosome.</text>
</comment>
<comment type="subcellular location">
    <subcellularLocation>
        <location evidence="1">Cytoplasm</location>
    </subcellularLocation>
</comment>
<comment type="similarity">
    <text evidence="1">Belongs to the EF-Ts family.</text>
</comment>
<evidence type="ECO:0000255" key="1">
    <source>
        <dbReference type="HAMAP-Rule" id="MF_00050"/>
    </source>
</evidence>
<accession>Q8PMK6</accession>
<dbReference type="EMBL" id="AE008923">
    <property type="protein sequence ID" value="AAM36292.1"/>
    <property type="molecule type" value="Genomic_DNA"/>
</dbReference>
<dbReference type="RefSeq" id="WP_003485364.1">
    <property type="nucleotide sequence ID" value="NC_003919.1"/>
</dbReference>
<dbReference type="SMR" id="Q8PMK6"/>
<dbReference type="GeneID" id="66910588"/>
<dbReference type="KEGG" id="xac:XAC1421"/>
<dbReference type="eggNOG" id="COG0264">
    <property type="taxonomic scope" value="Bacteria"/>
</dbReference>
<dbReference type="HOGENOM" id="CLU_047155_0_0_6"/>
<dbReference type="Proteomes" id="UP000000576">
    <property type="component" value="Chromosome"/>
</dbReference>
<dbReference type="GO" id="GO:0005737">
    <property type="term" value="C:cytoplasm"/>
    <property type="evidence" value="ECO:0007669"/>
    <property type="project" value="UniProtKB-SubCell"/>
</dbReference>
<dbReference type="GO" id="GO:0003746">
    <property type="term" value="F:translation elongation factor activity"/>
    <property type="evidence" value="ECO:0007669"/>
    <property type="project" value="UniProtKB-UniRule"/>
</dbReference>
<dbReference type="CDD" id="cd14275">
    <property type="entry name" value="UBA_EF-Ts"/>
    <property type="match status" value="1"/>
</dbReference>
<dbReference type="FunFam" id="1.10.286.20:FF:000001">
    <property type="entry name" value="Elongation factor Ts"/>
    <property type="match status" value="1"/>
</dbReference>
<dbReference type="FunFam" id="1.10.8.10:FF:000001">
    <property type="entry name" value="Elongation factor Ts"/>
    <property type="match status" value="1"/>
</dbReference>
<dbReference type="FunFam" id="3.30.479.20:FF:000001">
    <property type="entry name" value="Elongation factor Ts"/>
    <property type="match status" value="1"/>
</dbReference>
<dbReference type="Gene3D" id="1.10.286.20">
    <property type="match status" value="1"/>
</dbReference>
<dbReference type="Gene3D" id="1.10.8.10">
    <property type="entry name" value="DNA helicase RuvA subunit, C-terminal domain"/>
    <property type="match status" value="1"/>
</dbReference>
<dbReference type="Gene3D" id="3.30.479.20">
    <property type="entry name" value="Elongation factor Ts, dimerisation domain"/>
    <property type="match status" value="2"/>
</dbReference>
<dbReference type="HAMAP" id="MF_00050">
    <property type="entry name" value="EF_Ts"/>
    <property type="match status" value="1"/>
</dbReference>
<dbReference type="InterPro" id="IPR036402">
    <property type="entry name" value="EF-Ts_dimer_sf"/>
</dbReference>
<dbReference type="InterPro" id="IPR001816">
    <property type="entry name" value="Transl_elong_EFTs/EF1B"/>
</dbReference>
<dbReference type="InterPro" id="IPR014039">
    <property type="entry name" value="Transl_elong_EFTs/EF1B_dimer"/>
</dbReference>
<dbReference type="InterPro" id="IPR018101">
    <property type="entry name" value="Transl_elong_Ts_CS"/>
</dbReference>
<dbReference type="InterPro" id="IPR009060">
    <property type="entry name" value="UBA-like_sf"/>
</dbReference>
<dbReference type="NCBIfam" id="TIGR00116">
    <property type="entry name" value="tsf"/>
    <property type="match status" value="1"/>
</dbReference>
<dbReference type="PANTHER" id="PTHR11741">
    <property type="entry name" value="ELONGATION FACTOR TS"/>
    <property type="match status" value="1"/>
</dbReference>
<dbReference type="PANTHER" id="PTHR11741:SF0">
    <property type="entry name" value="ELONGATION FACTOR TS, MITOCHONDRIAL"/>
    <property type="match status" value="1"/>
</dbReference>
<dbReference type="Pfam" id="PF00889">
    <property type="entry name" value="EF_TS"/>
    <property type="match status" value="1"/>
</dbReference>
<dbReference type="SUPFAM" id="SSF54713">
    <property type="entry name" value="Elongation factor Ts (EF-Ts), dimerisation domain"/>
    <property type="match status" value="2"/>
</dbReference>
<dbReference type="SUPFAM" id="SSF46934">
    <property type="entry name" value="UBA-like"/>
    <property type="match status" value="1"/>
</dbReference>
<dbReference type="PROSITE" id="PS01126">
    <property type="entry name" value="EF_TS_1"/>
    <property type="match status" value="1"/>
</dbReference>
<dbReference type="PROSITE" id="PS01127">
    <property type="entry name" value="EF_TS_2"/>
    <property type="match status" value="1"/>
</dbReference>